<reference evidence="5" key="1">
    <citation type="journal article" date="2005" name="Peptides">
        <title>Peptidomics of neurohemal organs from species of the cockroach family Blattidae: how do neuropeptides of closely related species differ?</title>
        <authorList>
            <person name="Predel R."/>
            <person name="Gaede G."/>
        </authorList>
    </citation>
    <scope>PROTEIN SEQUENCE</scope>
    <scope>MASS SPECTROMETRY</scope>
    <scope>AMIDATION AT LEU-14</scope>
    <source>
        <tissue evidence="3">Corpora allata</tissue>
    </source>
</reference>
<reference evidence="5" key="2">
    <citation type="submission" date="2004-11" db="UniProtKB">
        <authorList>
            <person name="Predel R."/>
            <person name="Gaede G."/>
        </authorList>
    </citation>
    <scope>SUBCELLULAR LOCATION</scope>
    <scope>TISSUE SPECIFICITY</scope>
</reference>
<dbReference type="GO" id="GO:0005576">
    <property type="term" value="C:extracellular region"/>
    <property type="evidence" value="ECO:0007669"/>
    <property type="project" value="UniProtKB-SubCell"/>
</dbReference>
<dbReference type="GO" id="GO:0005184">
    <property type="term" value="F:neuropeptide hormone activity"/>
    <property type="evidence" value="ECO:0007669"/>
    <property type="project" value="InterPro"/>
</dbReference>
<dbReference type="GO" id="GO:0007218">
    <property type="term" value="P:neuropeptide signaling pathway"/>
    <property type="evidence" value="ECO:0007669"/>
    <property type="project" value="UniProtKB-KW"/>
</dbReference>
<dbReference type="InterPro" id="IPR001484">
    <property type="entry name" value="Pyrokinin_CS"/>
</dbReference>
<dbReference type="PROSITE" id="PS00539">
    <property type="entry name" value="PYROKININ"/>
    <property type="match status" value="1"/>
</dbReference>
<feature type="peptide" id="PRO_0000044361" description="Pyrokinin-6">
    <location>
        <begin position="1"/>
        <end position="14"/>
    </location>
</feature>
<feature type="modified residue" description="Leucine amide" evidence="3">
    <location>
        <position position="14"/>
    </location>
</feature>
<organism>
    <name type="scientific">Periplaneta brunnea</name>
    <name type="common">Brown cockroach</name>
    <dbReference type="NCBI Taxonomy" id="36976"/>
    <lineage>
        <taxon>Eukaryota</taxon>
        <taxon>Metazoa</taxon>
        <taxon>Ecdysozoa</taxon>
        <taxon>Arthropoda</taxon>
        <taxon>Hexapoda</taxon>
        <taxon>Insecta</taxon>
        <taxon>Pterygota</taxon>
        <taxon>Neoptera</taxon>
        <taxon>Polyneoptera</taxon>
        <taxon>Dictyoptera</taxon>
        <taxon>Blattodea</taxon>
        <taxon>Blattoidea</taxon>
        <taxon>Blattidae</taxon>
        <taxon>Blattinae</taxon>
        <taxon>Periplaneta</taxon>
    </lineage>
</organism>
<keyword id="KW-0027">Amidation</keyword>
<keyword id="KW-0903">Direct protein sequencing</keyword>
<keyword id="KW-0527">Neuropeptide</keyword>
<keyword id="KW-0964">Secreted</keyword>
<accession>P84359</accession>
<protein>
    <recommendedName>
        <fullName>Pyrokinin-6</fullName>
        <shortName>Peb-PK-6</shortName>
    </recommendedName>
    <alternativeName>
        <fullName>FXPRL-amide</fullName>
    </alternativeName>
</protein>
<name>PPK6_PERBR</name>
<evidence type="ECO:0000250" key="1">
    <source>
        <dbReference type="UniProtKB" id="P82693"/>
    </source>
</evidence>
<evidence type="ECO:0000255" key="2"/>
<evidence type="ECO:0000269" key="3">
    <source>
    </source>
</evidence>
<evidence type="ECO:0000269" key="4">
    <source ref="2"/>
</evidence>
<evidence type="ECO:0000305" key="5"/>
<sequence length="14" mass="1588">SDPEVPGMWFGPRL</sequence>
<comment type="function">
    <text evidence="1">Myoactive.</text>
</comment>
<comment type="subcellular location">
    <subcellularLocation>
        <location evidence="4">Secreted</location>
    </subcellularLocation>
</comment>
<comment type="tissue specificity">
    <text evidence="4">Expressed in the brain, subesophageal ganglion and in the retrocerebral complex (mainly corpora cardiaca).</text>
</comment>
<comment type="mass spectrometry" mass="1586.8" method="MALDI" evidence="3"/>
<comment type="similarity">
    <text evidence="2">Belongs to the pyrokinin family.</text>
</comment>
<proteinExistence type="evidence at protein level"/>